<organism>
    <name type="scientific">Homo sapiens</name>
    <name type="common">Human</name>
    <dbReference type="NCBI Taxonomy" id="9606"/>
    <lineage>
        <taxon>Eukaryota</taxon>
        <taxon>Metazoa</taxon>
        <taxon>Chordata</taxon>
        <taxon>Craniata</taxon>
        <taxon>Vertebrata</taxon>
        <taxon>Euteleostomi</taxon>
        <taxon>Mammalia</taxon>
        <taxon>Eutheria</taxon>
        <taxon>Euarchontoglires</taxon>
        <taxon>Primates</taxon>
        <taxon>Haplorrhini</taxon>
        <taxon>Catarrhini</taxon>
        <taxon>Hominidae</taxon>
        <taxon>Homo</taxon>
    </lineage>
</organism>
<reference key="1">
    <citation type="journal article" date="2000" name="J. Biol. Chem.">
        <title>Identification of a fourth subunit of mammalian DNA polymerase delta.</title>
        <authorList>
            <person name="Liu L."/>
            <person name="Mo J.-Y."/>
            <person name="Rodriguez-Belmonte E.M."/>
            <person name="Lee M.Y.W.T."/>
        </authorList>
    </citation>
    <scope>NUCLEOTIDE SEQUENCE [MRNA] (ISOFORM 1)</scope>
    <source>
        <tissue>Ovarian carcinoma</tissue>
    </source>
</reference>
<reference key="2">
    <citation type="submission" date="2005-02" db="EMBL/GenBank/DDBJ databases">
        <authorList>
            <consortium name="NIEHS SNPs program"/>
        </authorList>
    </citation>
    <scope>NUCLEOTIDE SEQUENCE [GENOMIC DNA]</scope>
    <scope>VARIANT PRO-39</scope>
</reference>
<reference key="3">
    <citation type="journal article" date="2006" name="Nature">
        <title>Human chromosome 11 DNA sequence and analysis including novel gene identification.</title>
        <authorList>
            <person name="Taylor T.D."/>
            <person name="Noguchi H."/>
            <person name="Totoki Y."/>
            <person name="Toyoda A."/>
            <person name="Kuroki Y."/>
            <person name="Dewar K."/>
            <person name="Lloyd C."/>
            <person name="Itoh T."/>
            <person name="Takeda T."/>
            <person name="Kim D.-W."/>
            <person name="She X."/>
            <person name="Barlow K.F."/>
            <person name="Bloom T."/>
            <person name="Bruford E."/>
            <person name="Chang J.L."/>
            <person name="Cuomo C.A."/>
            <person name="Eichler E."/>
            <person name="FitzGerald M.G."/>
            <person name="Jaffe D.B."/>
            <person name="LaButti K."/>
            <person name="Nicol R."/>
            <person name="Park H.-S."/>
            <person name="Seaman C."/>
            <person name="Sougnez C."/>
            <person name="Yang X."/>
            <person name="Zimmer A.R."/>
            <person name="Zody M.C."/>
            <person name="Birren B.W."/>
            <person name="Nusbaum C."/>
            <person name="Fujiyama A."/>
            <person name="Hattori M."/>
            <person name="Rogers J."/>
            <person name="Lander E.S."/>
            <person name="Sakaki Y."/>
        </authorList>
    </citation>
    <scope>NUCLEOTIDE SEQUENCE [LARGE SCALE GENOMIC DNA]</scope>
</reference>
<reference key="4">
    <citation type="journal article" date="2004" name="Genome Res.">
        <title>The status, quality, and expansion of the NIH full-length cDNA project: the Mammalian Gene Collection (MGC).</title>
        <authorList>
            <consortium name="The MGC Project Team"/>
        </authorList>
    </citation>
    <scope>NUCLEOTIDE SEQUENCE [LARGE SCALE MRNA] (ISOFORM 2)</scope>
    <source>
        <tissue>Urinary bladder</tissue>
    </source>
</reference>
<reference key="5">
    <citation type="journal article" date="2002" name="Biochemistry">
        <title>Reconstitution and characterization of the human DNA polymerase delta four-subunit holoenzyme.</title>
        <authorList>
            <person name="Xie B."/>
            <person name="Mazloum N."/>
            <person name="Liu L."/>
            <person name="Rahmeh A."/>
            <person name="Li H."/>
            <person name="Lee M.Y."/>
        </authorList>
    </citation>
    <scope>IDENTIFICATION IN POL-DELTA COMPLEX</scope>
    <scope>INTERACTION WITH POLD1</scope>
    <scope>CHARACTERIZATION OF POL-DELTA2 AND POL-DELTA4 COMPLEXES</scope>
</reference>
<reference key="6">
    <citation type="journal article" date="2003" name="J. Biol. Chem.">
        <title>Identification of a novel protein, PDIP38, that interacts with the p50 subunit of DNA polymerase delta and proliferating cell nuclear antigen.</title>
        <authorList>
            <person name="Liu L."/>
            <person name="Rodriguez-Belmonte E.M."/>
            <person name="Mazloum N."/>
            <person name="Xie B."/>
            <person name="Lee M.Y.W.T."/>
        </authorList>
    </citation>
    <scope>INTERACTION WITH POLDIP2</scope>
</reference>
<reference key="7">
    <citation type="journal article" date="2005" name="Genes Cells">
        <title>Human Werner helicase interacting protein 1 (WRNIP1) functions as a novel modulator for DNA polymerase delta.</title>
        <authorList>
            <person name="Tsurimoto T."/>
            <person name="Shinozaki A."/>
            <person name="Yano M."/>
            <person name="Seki M."/>
            <person name="Enomoto T."/>
        </authorList>
    </citation>
    <scope>INTERACTION WITH WRNIP1</scope>
</reference>
<reference key="8">
    <citation type="journal article" date="2006" name="Biochem. Biophys. Res. Commun.">
        <title>The p66 and p12 subunits of DNA polymerase delta are modified by ubiquitin and ubiquitin-like proteins.</title>
        <authorList>
            <person name="Liu G."/>
            <person name="Warbrick E."/>
        </authorList>
    </citation>
    <scope>UBIQUITINATION</scope>
    <scope>MUTAGENESIS OF LYS-4; LYS-15; LYS-25; LYS-74 AND LYS-89</scope>
</reference>
<reference key="9">
    <citation type="journal article" date="2006" name="J. Biol. Chem.">
        <title>Functional roles of p12, the fourth subunit of human DNA polymerase delta.</title>
        <authorList>
            <person name="Li H."/>
            <person name="Xie B."/>
            <person name="Zhou Y."/>
            <person name="Rahmeh A."/>
            <person name="Trusa S."/>
            <person name="Zhang S."/>
            <person name="Gao Y."/>
            <person name="Lee E.Y."/>
            <person name="Lee M.Y."/>
        </authorList>
    </citation>
    <scope>FUNCTION</scope>
    <scope>INTERACTION WITH POLD1; POLD2 AND PCNA</scope>
    <scope>MUTAGENESIS OF ILE-7 AND 10-SER-TYR-11</scope>
</reference>
<reference key="10">
    <citation type="journal article" date="2007" name="J. Biol. Chem.">
        <title>A novel DNA damage response: rapid degradation of the p12 subunit of dna polymerase delta.</title>
        <authorList>
            <person name="Zhang S."/>
            <person name="Zhou Y."/>
            <person name="Trusa S."/>
            <person name="Meng X."/>
            <person name="Lee E.Y."/>
            <person name="Lee M.Y."/>
        </authorList>
    </citation>
    <scope>UBIQUITINATION</scope>
    <scope>DEGRADATION IN RESPONSE TO DNA DAMAGE</scope>
    <scope>IDENTIFICATION IN POL-DELTA COMPLEX</scope>
</reference>
<reference key="11">
    <citation type="journal article" date="2009" name="Nucleic Acids Res.">
        <title>DNA damage alters DNA polymerase delta to a form that exhibits increased discrimination against modified template bases and mismatched primers.</title>
        <authorList>
            <person name="Meng X."/>
            <person name="Zhou Y."/>
            <person name="Zhang S."/>
            <person name="Lee E.Y."/>
            <person name="Frick D.N."/>
            <person name="Lee M.Y."/>
        </authorList>
    </citation>
    <scope>FUNCTION</scope>
</reference>
<reference key="12">
    <citation type="journal article" date="2010" name="Biochemistry">
        <title>The p12 subunit of human polymerase delta modulates the rate and fidelity of DNA synthesis.</title>
        <authorList>
            <person name="Meng X."/>
            <person name="Zhou Y."/>
            <person name="Lee E.Y."/>
            <person name="Lee M.Y."/>
            <person name="Frick D.N."/>
        </authorList>
    </citation>
    <scope>FUNCTION</scope>
</reference>
<reference key="13">
    <citation type="journal article" date="2012" name="Cell Cycle">
        <title>Spatiotemporal recruitment of human DNA polymerase delta to sites of UV damage.</title>
        <authorList>
            <person name="Chea J."/>
            <person name="Zhang S."/>
            <person name="Zhao H."/>
            <person name="Zhang Z."/>
            <person name="Lee E.Y."/>
            <person name="Darzynkiewicz Z."/>
            <person name="Lee M.Y."/>
        </authorList>
    </citation>
    <scope>SUBCELLULAR LOCATION</scope>
    <scope>IDENTIFICATION IN POL-DELTA COMPLEX</scope>
    <scope>INDUCTION BY UV</scope>
    <scope>DEVELOPMENTAL STAGE</scope>
</reference>
<reference key="14">
    <citation type="journal article" date="2013" name="DNA Repair">
        <title>Dynamics of enzymatic interactions during short flap human Okazaki fragment processing by two forms of human DNA polymerase delta.</title>
        <authorList>
            <person name="Lin S.H."/>
            <person name="Wang X."/>
            <person name="Zhang S."/>
            <person name="Zhang Z."/>
            <person name="Lee E.Y."/>
            <person name="Lee M.Y."/>
        </authorList>
    </citation>
    <scope>FUNCTION IN OKAZAKI FRAGMENT PROCESSING</scope>
</reference>
<reference key="15">
    <citation type="journal article" date="2013" name="J. Biol. Chem.">
        <title>Identification of RNF8 as a ubiquitin ligase involved in targeting the p12 subunit of DNA polymerase delta for degradation in response to DNA damage.</title>
        <authorList>
            <person name="Zhang S."/>
            <person name="Zhou Y."/>
            <person name="Sarkeshik A."/>
            <person name="Yates J.R. III"/>
            <person name="Thomson T.M."/>
            <person name="Zhang Z."/>
            <person name="Lee E.Y."/>
            <person name="Lee M.Y."/>
        </authorList>
    </citation>
    <scope>UBIQUITINATION BY RNF8</scope>
    <scope>INDUCTION BY UV</scope>
</reference>
<reference key="16">
    <citation type="journal article" date="2013" name="J. Biol. Chem.">
        <title>A novel function of CRL4(Cdt2): regulation of the subunit structure of DNA polymerase delta in response to DNA damage and during the S phase.</title>
        <authorList>
            <person name="Zhang S."/>
            <person name="Zhao H."/>
            <person name="Darzynkiewicz Z."/>
            <person name="Zhou P."/>
            <person name="Zhang Z."/>
            <person name="Lee E.Y."/>
            <person name="Lee M.Y."/>
        </authorList>
    </citation>
    <scope>UBIQUITINATION BY DTL</scope>
    <scope>DEVELOPMENTAL STAGE</scope>
    <scope>DEGRADATION IN RESPONSE TO DNA DAMAGE</scope>
    <scope>MUTAGENESIS OF THR-8; ASP-9; LYS-15; ARG-16 AND ARG-17</scope>
</reference>
<reference key="17">
    <citation type="journal article" date="2013" name="J. Biol. Chem.">
        <title>Degradation of p12 subunit by CRL4Cdt2 E3 ligase inhibits fork progression after DNA damage.</title>
        <authorList>
            <person name="Terai K."/>
            <person name="Shibata E."/>
            <person name="Abbas T."/>
            <person name="Dutta A."/>
        </authorList>
    </citation>
    <scope>FUNCTION</scope>
    <scope>INTERACTION WITH PCNA</scope>
    <scope>INDUCTION BY UV</scope>
    <scope>UBIQUITINATION BY DTL</scope>
    <scope>MUTAGENESIS OF 1-MET--ARG-16; LYS-4; SER-10 AND LYS-15</scope>
</reference>
<reference key="18">
    <citation type="journal article" date="2014" name="Cell Cycle">
        <title>The tail that wags the dog: p12, the smallest subunit of DNA polymerase delta, is degraded by ubiquitin ligases in response to DNA damage and during cell cycle progression.</title>
        <authorList>
            <person name="Lee M.Y."/>
            <person name="Zhang S."/>
            <person name="Lin S.H."/>
            <person name="Wang X."/>
            <person name="Darzynkiewicz Z."/>
            <person name="Zhang Z."/>
            <person name="Lee E.Y."/>
        </authorList>
    </citation>
    <scope>INDUCTION BY IR AND UV</scope>
    <scope>REVIEW</scope>
</reference>
<reference key="19">
    <citation type="journal article" date="2014" name="Science">
        <title>Break-induced replication repair of damaged forks induces genomic duplications in human cells.</title>
        <authorList>
            <person name="Costantino L."/>
            <person name="Sotiriou S.K."/>
            <person name="Rantala J.K."/>
            <person name="Magin S."/>
            <person name="Mladenov E."/>
            <person name="Helleday T."/>
            <person name="Haber J.E."/>
            <person name="Iliakis G."/>
            <person name="Kallioniemi O.P."/>
            <person name="Halazonetis T.D."/>
        </authorList>
    </citation>
    <scope>FUNCTION</scope>
</reference>
<feature type="chain" id="PRO_0000186051" description="DNA polymerase delta subunit 4">
    <location>
        <begin position="1"/>
        <end position="107"/>
    </location>
</feature>
<feature type="region of interest" description="Disordered" evidence="1">
    <location>
        <begin position="1"/>
        <end position="44"/>
    </location>
</feature>
<feature type="short sequence motif" description="PCNA-interaction protein motif (PIP box)" evidence="5 13">
    <location>
        <begin position="1"/>
        <end position="16"/>
    </location>
</feature>
<feature type="compositionally biased region" description="Basic and acidic residues" evidence="1">
    <location>
        <begin position="15"/>
        <end position="28"/>
    </location>
</feature>
<feature type="splice variant" id="VSP_046864" description="In isoform 2." evidence="18">
    <original>GITRLQRWCRAKQMGLEPPPEVWQVLKTHPGDPRFQCSLWHLYPL</original>
    <variation>VSGISIPYEAPRKTSCP</variation>
    <location>
        <begin position="63"/>
        <end position="107"/>
    </location>
</feature>
<feature type="sequence variant" id="VAR_022269" description="In dbSNP:rs28364240." evidence="17">
    <original>R</original>
    <variation>P</variation>
    <location>
        <position position="39"/>
    </location>
</feature>
<feature type="sequence variant" id="VAR_057526" description="In dbSNP:rs34136263.">
    <original>G</original>
    <variation>R</variation>
    <location>
        <position position="59"/>
    </location>
</feature>
<feature type="mutagenesis site" description="Complete loss of PCNA binding and of degradation after UV irradiation." evidence="13">
    <location>
        <begin position="1"/>
        <end position="16"/>
    </location>
</feature>
<feature type="mutagenesis site" description="No effect on PCNA binding." evidence="13">
    <original>K</original>
    <variation>A</variation>
    <location>
        <position position="4"/>
    </location>
</feature>
<feature type="mutagenesis site" description="No effect on PCNA binding, nor on degradation after UV irradiation; when associated with Y-10. No effect on PCNA binding, but normal degradation after UV irradiation; when associated with Y-10 and A-15." evidence="13">
    <original>K</original>
    <variation>Q</variation>
    <location>
        <position position="4"/>
    </location>
</feature>
<feature type="mutagenesis site" description="No effect on ubiquitination. Loss of ubiquitination, when associated with R-15, R-25, R-74 and R-89." evidence="6">
    <original>K</original>
    <variation>R</variation>
    <location>
        <position position="4"/>
    </location>
</feature>
<feature type="mutagenesis site" description="Complete loss of PCNA binding; when associated with 10-AA-11." evidence="5">
    <original>I</original>
    <variation>A</variation>
    <location>
        <position position="7"/>
    </location>
</feature>
<feature type="mutagenesis site" description="Strongly increased stability following UV irradiation; when associated with A-9." evidence="12">
    <original>T</original>
    <variation>A</variation>
    <location>
        <position position="8"/>
    </location>
</feature>
<feature type="mutagenesis site" description="Complete loss of PCNA binding." evidence="13">
    <original>T</original>
    <variation>D</variation>
    <location>
        <position position="8"/>
    </location>
</feature>
<feature type="mutagenesis site" description="Strongly increased stability following UV irradiation; when associated with A-8." evidence="12">
    <original>D</original>
    <variation>A</variation>
    <location>
        <position position="9"/>
    </location>
</feature>
<feature type="mutagenesis site" description="Complete loss of PCNA binding; when associated with A-7." evidence="5">
    <original>SY</original>
    <variation>AA</variation>
    <location>
        <begin position="10"/>
        <end position="11"/>
    </location>
</feature>
<feature type="mutagenesis site" description="No effect on PCNA binding, nor on degradation after UV irradiation; when associated with Q-4. No effect on PCNA binding, but normal degradation after UV irradiation with Q-4 and A-15." evidence="13">
    <original>S</original>
    <variation>Y</variation>
    <location>
        <position position="10"/>
    </location>
</feature>
<feature type="mutagenesis site" description="Decreased PCNA binding. No effect on PCNA binding, but normal degradation after UV irradiation; when associated with Q-4 and Y-10. Increased stability following UV irradiation and no trough during S phase; when associated with A-16 and A-17." evidence="12 13">
    <original>K</original>
    <variation>A</variation>
    <location>
        <position position="15"/>
    </location>
</feature>
<feature type="mutagenesis site" description="No effect on ubiquitination. Loss of ubiquitination; when associated with R-4, R-25, R-74 and R-89." evidence="6">
    <original>K</original>
    <variation>R</variation>
    <location>
        <position position="15"/>
    </location>
</feature>
<feature type="mutagenesis site" description="Increased stability following UV irradiation and no trough during S phase; when associated with A-15 and A-17." evidence="12">
    <original>R</original>
    <variation>A</variation>
    <location>
        <position position="16"/>
    </location>
</feature>
<feature type="mutagenesis site" description="Increased stability following UV irradiation and no trough during S phase; when associated with A-15 and A-16." evidence="12">
    <original>R</original>
    <variation>A</variation>
    <location>
        <position position="17"/>
    </location>
</feature>
<feature type="mutagenesis site" description="No effect on ubiquitination. Loss of ubiquitination; when associated with R-4, R-15, R-74 and R-89." evidence="6">
    <original>K</original>
    <variation>R</variation>
    <location>
        <position position="25"/>
    </location>
</feature>
<feature type="mutagenesis site" description="No effect on ubiquitination. Loss of ubiquitination; when associated with R-4, R-15, R-25 and R-89." evidence="6">
    <original>K</original>
    <variation>R</variation>
    <location>
        <position position="74"/>
    </location>
</feature>
<feature type="mutagenesis site" description="No effect on ubiquitination. Loss of ubiquitination; when associated with R-4, R-15, R-25 and R-74." evidence="6">
    <original>K</original>
    <variation>R</variation>
    <location>
        <position position="89"/>
    </location>
</feature>
<feature type="helix" evidence="20">
    <location>
        <begin position="7"/>
        <end position="9"/>
    </location>
</feature>
<feature type="strand" evidence="20">
    <location>
        <begin position="13"/>
        <end position="15"/>
    </location>
</feature>
<feature type="helix" evidence="21">
    <location>
        <begin position="45"/>
        <end position="52"/>
    </location>
</feature>
<feature type="strand" evidence="21">
    <location>
        <begin position="62"/>
        <end position="64"/>
    </location>
</feature>
<feature type="helix" evidence="21">
    <location>
        <begin position="66"/>
        <end position="76"/>
    </location>
</feature>
<feature type="strand" evidence="21">
    <location>
        <begin position="88"/>
        <end position="91"/>
    </location>
</feature>
<feature type="turn" evidence="21">
    <location>
        <begin position="95"/>
        <end position="97"/>
    </location>
</feature>
<feature type="strand" evidence="21">
    <location>
        <begin position="103"/>
        <end position="105"/>
    </location>
</feature>
<proteinExistence type="evidence at protein level"/>
<gene>
    <name type="primary">POLD4</name>
    <name type="synonym">POLDS</name>
</gene>
<sequence length="107" mass="12433">MGRKRLITDSYPVVKRREGPAGHSKGELAPELGEEPQPRDEEEAELELLRQFDLAWQYGPCTGITRLQRWCRAKQMGLEPPPEVWQVLKTHPGDPRFQCSLWHLYPL</sequence>
<keyword id="KW-0002">3D-structure</keyword>
<keyword id="KW-0025">Alternative splicing</keyword>
<keyword id="KW-0227">DNA damage</keyword>
<keyword id="KW-0228">DNA excision</keyword>
<keyword id="KW-0234">DNA repair</keyword>
<keyword id="KW-0235">DNA replication</keyword>
<keyword id="KW-0539">Nucleus</keyword>
<keyword id="KW-1267">Proteomics identification</keyword>
<keyword id="KW-1185">Reference proteome</keyword>
<keyword id="KW-0832">Ubl conjugation</keyword>
<accession>Q9HCU8</accession>
<accession>F5H506</accession>
<evidence type="ECO:0000256" key="1">
    <source>
        <dbReference type="SAM" id="MobiDB-lite"/>
    </source>
</evidence>
<evidence type="ECO:0000269" key="2">
    <source>
    </source>
</evidence>
<evidence type="ECO:0000269" key="3">
    <source>
    </source>
</evidence>
<evidence type="ECO:0000269" key="4">
    <source>
    </source>
</evidence>
<evidence type="ECO:0000269" key="5">
    <source>
    </source>
</evidence>
<evidence type="ECO:0000269" key="6">
    <source>
    </source>
</evidence>
<evidence type="ECO:0000269" key="7">
    <source>
    </source>
</evidence>
<evidence type="ECO:0000269" key="8">
    <source>
    </source>
</evidence>
<evidence type="ECO:0000269" key="9">
    <source>
    </source>
</evidence>
<evidence type="ECO:0000269" key="10">
    <source>
    </source>
</evidence>
<evidence type="ECO:0000269" key="11">
    <source>
    </source>
</evidence>
<evidence type="ECO:0000269" key="12">
    <source>
    </source>
</evidence>
<evidence type="ECO:0000269" key="13">
    <source>
    </source>
</evidence>
<evidence type="ECO:0000269" key="14">
    <source>
    </source>
</evidence>
<evidence type="ECO:0000269" key="15">
    <source>
    </source>
</evidence>
<evidence type="ECO:0000269" key="16">
    <source>
    </source>
</evidence>
<evidence type="ECO:0000269" key="17">
    <source ref="2"/>
</evidence>
<evidence type="ECO:0000303" key="18">
    <source>
    </source>
</evidence>
<evidence type="ECO:0000305" key="19"/>
<evidence type="ECO:0007829" key="20">
    <source>
        <dbReference type="PDB" id="6HVO"/>
    </source>
</evidence>
<evidence type="ECO:0007829" key="21">
    <source>
        <dbReference type="PDB" id="6TNY"/>
    </source>
</evidence>
<comment type="function">
    <text evidence="5 8 9 13 14 16">As a component of the tetrameric DNA polymerase delta complex (Pol-delta4), plays a role in high fidelity genome replication and repair. Within this complex, increases the rate of DNA synthesis and decreases fidelity by regulating POLD1 polymerase and proofreading 3' to 5' exonuclease activity (PubMed:16510448, PubMed:19074196, PubMed:20334433). Pol-delta4 participates in Okazaki fragment processing, through both the short flap pathway, as well as a nick translation system (PubMed:24035200). Under conditions of DNA replication stress, required for the repair of broken replication forks through break-induced replication (BIR), a mechanism that may induce segmental genomic duplications of up to 200 kb (PubMed:24310611). Involved in Pol-delta4 translesion synthesis (TLS) of templates carrying O6-methylguanine or abasic sites (PubMed:19074196). Its degradation in response to DNA damage is required for the inhibition of fork progression and cell survival (PubMed:24022480).</text>
</comment>
<comment type="subunit">
    <text evidence="2 3 4 5 7 10 13">Component of the tetrameric DNA polymerase delta complex (Pol-delta4), which consists of POLD1/p125, POLD2/p50, POLD3/p66/p68 and POLD4/p12, with POLD1 bearing DNA polymerase and 3' to 5' proofreading exonuclease activities (PubMed:16510448, PubMed:17317665, PubMed:22801543). Within this complex, directly interacts with POLD1 and POLD2 (PubMed:12403614, PubMed:16510448). Directly interacts with PCNA, as do POLD1 and POLD3; this interaction stimulates Pol-delta4 polymerase activity (PubMed:24022480). As POLD1 and POLD2, directly interacts with WRNIP1; this interaction stimulates DNA polymerase delta-mediated DNA synthesis, independently of the presence of PCNA. This stimulation may be due predominantly to an increase of initiation frequency and also to increased processivity (PubMed:15670210). Upon genotoxic stress induced by DNA damaging agents or by replication stress, POLD4 is proteolytically degraded and Pol-delta4 is converted into a trimeric form of the complex (Pol-delta3) which has an increased proofreading activity (PubMed:17317665, PubMed:22801543). The DNA polymerase delta complex interacts with POLDIP2; this interaction is probably mediated through direct binding to POLD2 (PubMed:12522211).</text>
</comment>
<comment type="interaction">
    <interactant intactId="EBI-864968">
        <id>Q9HCU8</id>
    </interactant>
    <interactant intactId="EBI-358311">
        <id>P12004</id>
        <label>PCNA</label>
    </interactant>
    <organismsDiffer>false</organismsDiffer>
    <experiments>4</experiments>
</comment>
<comment type="interaction">
    <interactant intactId="EBI-864968">
        <id>Q9HCU8</id>
    </interactant>
    <interactant intactId="EBI-716569">
        <id>P28340</id>
        <label>POLD1</label>
    </interactant>
    <organismsDiffer>false</organismsDiffer>
    <experiments>14</experiments>
</comment>
<comment type="interaction">
    <interactant intactId="EBI-864968">
        <id>Q9HCU8</id>
    </interactant>
    <interactant intactId="EBI-372354">
        <id>P49005</id>
        <label>POLD2</label>
    </interactant>
    <organismsDiffer>false</organismsDiffer>
    <experiments>7</experiments>
</comment>
<comment type="interaction">
    <interactant intactId="EBI-864968">
        <id>Q9HCU8</id>
    </interactant>
    <interactant intactId="EBI-2513471">
        <id>Q96S55</id>
        <label>WRNIP1</label>
    </interactant>
    <organismsDiffer>false</organismsDiffer>
    <experiments>2</experiments>
</comment>
<comment type="subcellular location">
    <subcellularLocation>
        <location evidence="10">Nucleus</location>
    </subcellularLocation>
    <text evidence="10">Partially recruited to DNA damage sites within 2 hours following UV irradiation, before degradation.</text>
</comment>
<comment type="alternative products">
    <event type="alternative splicing"/>
    <isoform>
        <id>Q9HCU8-1</id>
        <name>1</name>
        <sequence type="displayed"/>
    </isoform>
    <isoform>
        <id>Q9HCU8-2</id>
        <name>2</name>
        <sequence type="described" ref="VSP_046864"/>
    </isoform>
</comment>
<comment type="developmental stage">
    <text evidence="10 12">Expression is cell cycle-dependent, with highest levels in G2/M phase and a drastic drop in S phase (PubMed:22801543, PubMed:23913683). This trough may be mediated by DCX(DTL) E3 ubiquitin ligase complex (also called CRL4(CDT2))-mediated proteasomal degradation (PubMed:23913683).</text>
</comment>
<comment type="induction">
    <text evidence="7 10 11 12 15">In response to DNA damage, genotoxic stress and replication stress, following UV irradiation, ionizing radiation, treatment with methyl methanesulfonate, hydroxyurea, or with aphidicolin, protein expression drops to undetectable levels, due to proteasomal degradation (PubMed:17317665, PubMed:22801543, PubMed:23233665, PubMed:23913683, PubMed:24300032). This down-regulation is ATR-dependent (PubMed:17317665).</text>
</comment>
<comment type="PTM">
    <text evidence="6 7 11 12 13">Ubiquitinated; undergoes 'Lys-48'-linked ubiquitination in response to UV irradiation, leading to proteasomal degradation (PubMed:16934752, PubMed:17317665, PubMed:23233665, PubMed:23913683). This modification is partly mediated by RNF8 and by the DCX(DTL) E3 ubiquitin ligase complex (also called CRL4(CDT2)) (PubMed:23233665, PubMed:24022480). Efficient degradation requires the presence of PCNA and is required for the inhibition of fork progression after DNA damage (PubMed:24022480).</text>
</comment>
<comment type="similarity">
    <text evidence="19">Belongs to the DNA polymerase delta subunit 4 family.</text>
</comment>
<protein>
    <recommendedName>
        <fullName>DNA polymerase delta subunit 4</fullName>
    </recommendedName>
    <alternativeName>
        <fullName>DNA polymerase delta subunit p12</fullName>
    </alternativeName>
</protein>
<dbReference type="EMBL" id="AF179890">
    <property type="protein sequence ID" value="AAG08966.1"/>
    <property type="molecule type" value="mRNA"/>
</dbReference>
<dbReference type="EMBL" id="AY928482">
    <property type="protein sequence ID" value="AAX09676.1"/>
    <property type="molecule type" value="Genomic_DNA"/>
</dbReference>
<dbReference type="EMBL" id="AP003419">
    <property type="status" value="NOT_ANNOTATED_CDS"/>
    <property type="molecule type" value="Genomic_DNA"/>
</dbReference>
<dbReference type="EMBL" id="BG403692">
    <property type="status" value="NOT_ANNOTATED_CDS"/>
    <property type="molecule type" value="mRNA"/>
</dbReference>
<dbReference type="CCDS" id="CCDS58149.1">
    <molecule id="Q9HCU8-2"/>
</dbReference>
<dbReference type="CCDS" id="CCDS8158.1">
    <molecule id="Q9HCU8-1"/>
</dbReference>
<dbReference type="RefSeq" id="NP_001243799.1">
    <molecule id="Q9HCU8-2"/>
    <property type="nucleotide sequence ID" value="NM_001256870.2"/>
</dbReference>
<dbReference type="RefSeq" id="NP_066996.3">
    <molecule id="Q9HCU8-1"/>
    <property type="nucleotide sequence ID" value="NM_021173.4"/>
</dbReference>
<dbReference type="PDB" id="6HVO">
    <property type="method" value="X-ray"/>
    <property type="resolution" value="2.10 A"/>
    <property type="chains" value="D/E/F=1-19"/>
</dbReference>
<dbReference type="PDB" id="6S1M">
    <property type="method" value="EM"/>
    <property type="resolution" value="4.27 A"/>
    <property type="chains" value="D=2-107"/>
</dbReference>
<dbReference type="PDB" id="6S1N">
    <property type="method" value="EM"/>
    <property type="resolution" value="4.86 A"/>
    <property type="chains" value="D=2-107"/>
</dbReference>
<dbReference type="PDB" id="6S1O">
    <property type="method" value="EM"/>
    <property type="resolution" value="8.10 A"/>
    <property type="chains" value="D=2-107"/>
</dbReference>
<dbReference type="PDB" id="6TNY">
    <property type="method" value="EM"/>
    <property type="resolution" value="3.08 A"/>
    <property type="chains" value="D=2-107"/>
</dbReference>
<dbReference type="PDB" id="6TNZ">
    <property type="method" value="EM"/>
    <property type="resolution" value="4.05 A"/>
    <property type="chains" value="D=2-107"/>
</dbReference>
<dbReference type="PDB" id="9EKB">
    <property type="method" value="EM"/>
    <property type="resolution" value="3.65 A"/>
    <property type="chains" value="D=1-107"/>
</dbReference>
<dbReference type="PDBsum" id="6HVO"/>
<dbReference type="PDBsum" id="6S1M"/>
<dbReference type="PDBsum" id="6S1N"/>
<dbReference type="PDBsum" id="6S1O"/>
<dbReference type="PDBsum" id="6TNY"/>
<dbReference type="PDBsum" id="6TNZ"/>
<dbReference type="PDBsum" id="9EKB"/>
<dbReference type="EMDB" id="EMD-10080"/>
<dbReference type="EMDB" id="EMD-10081"/>
<dbReference type="EMDB" id="EMD-10082"/>
<dbReference type="EMDB" id="EMD-10539"/>
<dbReference type="EMDB" id="EMD-10540"/>
<dbReference type="EMDB" id="EMD-48117"/>
<dbReference type="SMR" id="Q9HCU8"/>
<dbReference type="BioGRID" id="121774">
    <property type="interactions" value="10"/>
</dbReference>
<dbReference type="ComplexPortal" id="CPX-2097">
    <property type="entry name" value="DNA polymerase delta complex"/>
</dbReference>
<dbReference type="CORUM" id="Q9HCU8"/>
<dbReference type="FunCoup" id="Q9HCU8">
    <property type="interactions" value="282"/>
</dbReference>
<dbReference type="IntAct" id="Q9HCU8">
    <property type="interactions" value="8"/>
</dbReference>
<dbReference type="MINT" id="Q9HCU8"/>
<dbReference type="STRING" id="9606.ENSP00000311368"/>
<dbReference type="ChEMBL" id="CHEMBL2363042"/>
<dbReference type="DrugBank" id="DB12151">
    <property type="generic name" value="Brincidofovir"/>
</dbReference>
<dbReference type="iPTMnet" id="Q9HCU8"/>
<dbReference type="PhosphoSitePlus" id="Q9HCU8"/>
<dbReference type="BioMuta" id="POLD4"/>
<dbReference type="jPOST" id="Q9HCU8"/>
<dbReference type="MassIVE" id="Q9HCU8"/>
<dbReference type="PaxDb" id="9606-ENSP00000311368"/>
<dbReference type="PeptideAtlas" id="Q9HCU8"/>
<dbReference type="ProteomicsDB" id="26732"/>
<dbReference type="ProteomicsDB" id="81802">
    <molecule id="Q9HCU8-1"/>
</dbReference>
<dbReference type="Pumba" id="Q9HCU8"/>
<dbReference type="Antibodypedia" id="30343">
    <property type="antibodies" value="59 antibodies from 19 providers"/>
</dbReference>
<dbReference type="DNASU" id="57804"/>
<dbReference type="Ensembl" id="ENST00000312419.8">
    <molecule id="Q9HCU8-1"/>
    <property type="protein sequence ID" value="ENSP00000311368.3"/>
    <property type="gene ID" value="ENSG00000175482.9"/>
</dbReference>
<dbReference type="Ensembl" id="ENST00000539074.1">
    <molecule id="Q9HCU8-2"/>
    <property type="protein sequence ID" value="ENSP00000444780.1"/>
    <property type="gene ID" value="ENSG00000175482.9"/>
</dbReference>
<dbReference type="GeneID" id="57804"/>
<dbReference type="KEGG" id="hsa:57804"/>
<dbReference type="MANE-Select" id="ENST00000312419.8">
    <property type="protein sequence ID" value="ENSP00000311368.3"/>
    <property type="RefSeq nucleotide sequence ID" value="NM_021173.5"/>
    <property type="RefSeq protein sequence ID" value="NP_066996.3"/>
</dbReference>
<dbReference type="UCSC" id="uc001okm.5">
    <molecule id="Q9HCU8-1"/>
    <property type="organism name" value="human"/>
</dbReference>
<dbReference type="AGR" id="HGNC:14106"/>
<dbReference type="CTD" id="57804"/>
<dbReference type="DisGeNET" id="57804"/>
<dbReference type="GeneCards" id="POLD4"/>
<dbReference type="HGNC" id="HGNC:14106">
    <property type="gene designation" value="POLD4"/>
</dbReference>
<dbReference type="HPA" id="ENSG00000175482">
    <property type="expression patterns" value="Tissue enhanced (liver)"/>
</dbReference>
<dbReference type="MIM" id="611525">
    <property type="type" value="gene"/>
</dbReference>
<dbReference type="neXtProt" id="NX_Q9HCU8"/>
<dbReference type="OpenTargets" id="ENSG00000175482"/>
<dbReference type="PharmGKB" id="PA33498"/>
<dbReference type="VEuPathDB" id="HostDB:ENSG00000175482"/>
<dbReference type="eggNOG" id="ENOG502SC9I">
    <property type="taxonomic scope" value="Eukaryota"/>
</dbReference>
<dbReference type="GeneTree" id="ENSGT00390000005096"/>
<dbReference type="HOGENOM" id="CLU_132157_0_0_1"/>
<dbReference type="InParanoid" id="Q9HCU8"/>
<dbReference type="OMA" id="CTGISRM"/>
<dbReference type="OrthoDB" id="337486at2759"/>
<dbReference type="PAN-GO" id="Q9HCU8">
    <property type="GO annotations" value="4 GO annotations based on evolutionary models"/>
</dbReference>
<dbReference type="PhylomeDB" id="Q9HCU8"/>
<dbReference type="TreeFam" id="TF103004"/>
<dbReference type="PathwayCommons" id="Q9HCU8"/>
<dbReference type="Reactome" id="R-HSA-110314">
    <property type="pathway name" value="Recognition of DNA damage by PCNA-containing replication complex"/>
</dbReference>
<dbReference type="Reactome" id="R-HSA-174411">
    <property type="pathway name" value="Polymerase switching on the C-strand of the telomere"/>
</dbReference>
<dbReference type="Reactome" id="R-HSA-174414">
    <property type="pathway name" value="Processive synthesis on the C-strand of the telomere"/>
</dbReference>
<dbReference type="Reactome" id="R-HSA-174417">
    <property type="pathway name" value="Telomere C-strand (Lagging Strand) Synthesis"/>
</dbReference>
<dbReference type="Reactome" id="R-HSA-174437">
    <property type="pathway name" value="Removal of the Flap Intermediate from the C-strand"/>
</dbReference>
<dbReference type="Reactome" id="R-HSA-5358565">
    <property type="pathway name" value="Mismatch repair (MMR) directed by MSH2:MSH6 (MutSalpha)"/>
</dbReference>
<dbReference type="Reactome" id="R-HSA-5358606">
    <property type="pathway name" value="Mismatch repair (MMR) directed by MSH2:MSH3 (MutSbeta)"/>
</dbReference>
<dbReference type="Reactome" id="R-HSA-5651801">
    <property type="pathway name" value="PCNA-Dependent Long Patch Base Excision Repair"/>
</dbReference>
<dbReference type="Reactome" id="R-HSA-5656169">
    <property type="pathway name" value="Termination of translesion DNA synthesis"/>
</dbReference>
<dbReference type="Reactome" id="R-HSA-5685942">
    <property type="pathway name" value="HDR through Homologous Recombination (HRR)"/>
</dbReference>
<dbReference type="Reactome" id="R-HSA-5696397">
    <property type="pathway name" value="Gap-filling DNA repair synthesis and ligation in GG-NER"/>
</dbReference>
<dbReference type="Reactome" id="R-HSA-5696400">
    <property type="pathway name" value="Dual Incision in GG-NER"/>
</dbReference>
<dbReference type="Reactome" id="R-HSA-6782135">
    <property type="pathway name" value="Dual incision in TC-NER"/>
</dbReference>
<dbReference type="Reactome" id="R-HSA-6782210">
    <property type="pathway name" value="Gap-filling DNA repair synthesis and ligation in TC-NER"/>
</dbReference>
<dbReference type="Reactome" id="R-HSA-69091">
    <property type="pathway name" value="Polymerase switching"/>
</dbReference>
<dbReference type="Reactome" id="R-HSA-69166">
    <property type="pathway name" value="Removal of the Flap Intermediate"/>
</dbReference>
<dbReference type="Reactome" id="R-HSA-69183">
    <property type="pathway name" value="Processive synthesis on the lagging strand"/>
</dbReference>
<dbReference type="SignaLink" id="Q9HCU8"/>
<dbReference type="SIGNOR" id="Q9HCU8"/>
<dbReference type="BioGRID-ORCS" id="57804">
    <property type="hits" value="21 hits in 1156 CRISPR screens"/>
</dbReference>
<dbReference type="ChiTaRS" id="POLD4">
    <property type="organism name" value="human"/>
</dbReference>
<dbReference type="GeneWiki" id="POLD4"/>
<dbReference type="GenomeRNAi" id="57804"/>
<dbReference type="Pharos" id="Q9HCU8">
    <property type="development level" value="Tbio"/>
</dbReference>
<dbReference type="PRO" id="PR:Q9HCU8"/>
<dbReference type="Proteomes" id="UP000005640">
    <property type="component" value="Chromosome 11"/>
</dbReference>
<dbReference type="RNAct" id="Q9HCU8">
    <property type="molecule type" value="protein"/>
</dbReference>
<dbReference type="Bgee" id="ENSG00000175482">
    <property type="expression patterns" value="Expressed in mucosa of transverse colon and 97 other cell types or tissues"/>
</dbReference>
<dbReference type="ExpressionAtlas" id="Q9HCU8">
    <property type="expression patterns" value="baseline and differential"/>
</dbReference>
<dbReference type="GO" id="GO:0043625">
    <property type="term" value="C:delta DNA polymerase complex"/>
    <property type="evidence" value="ECO:0000353"/>
    <property type="project" value="ComplexPortal"/>
</dbReference>
<dbReference type="GO" id="GO:0005654">
    <property type="term" value="C:nucleoplasm"/>
    <property type="evidence" value="ECO:0000304"/>
    <property type="project" value="Reactome"/>
</dbReference>
<dbReference type="GO" id="GO:0000731">
    <property type="term" value="P:DNA synthesis involved in DNA repair"/>
    <property type="evidence" value="ECO:0000318"/>
    <property type="project" value="GO_Central"/>
</dbReference>
<dbReference type="GO" id="GO:0006261">
    <property type="term" value="P:DNA-templated DNA replication"/>
    <property type="evidence" value="ECO:0000314"/>
    <property type="project" value="ComplexPortal"/>
</dbReference>
<dbReference type="GO" id="GO:0001938">
    <property type="term" value="P:positive regulation of endothelial cell proliferation"/>
    <property type="evidence" value="ECO:0007669"/>
    <property type="project" value="Ensembl"/>
</dbReference>
<dbReference type="InterPro" id="IPR007218">
    <property type="entry name" value="DNA_pol_delta_4"/>
</dbReference>
<dbReference type="PANTHER" id="PTHR14303">
    <property type="entry name" value="DNA POLYMERASE DELTA SUBUNIT 4"/>
    <property type="match status" value="1"/>
</dbReference>
<dbReference type="PANTHER" id="PTHR14303:SF0">
    <property type="entry name" value="DNA POLYMERASE DELTA SUBUNIT 4"/>
    <property type="match status" value="1"/>
</dbReference>
<dbReference type="Pfam" id="PF04081">
    <property type="entry name" value="DNA_pol_delta_4"/>
    <property type="match status" value="1"/>
</dbReference>
<name>DPOD4_HUMAN</name>